<feature type="chain" id="PRO_0000079564" description="Polyketide synthase CurG">
    <location>
        <begin position="1"/>
        <end position="107"/>
    </location>
</feature>
<accession>Q02588</accession>
<proteinExistence type="predicted"/>
<reference key="1">
    <citation type="journal article" date="1992" name="Gene">
        <title>Analysis of a polyketide synthesis-encoding gene cluster of Streptomyces curacoi.</title>
        <authorList>
            <person name="Bergh S."/>
            <person name="Uhlen M."/>
        </authorList>
    </citation>
    <scope>NUCLEOTIDE SEQUENCE [GENOMIC DNA]</scope>
    <source>
        <strain>ATCC 13385 / CBS 484.68 / DSM 40107 / JCM 4219 / NBRC 12761 / NRRL B-2901 / VKM Ac-621</strain>
    </source>
</reference>
<name>CURG_STRCN</name>
<gene>
    <name type="primary">curG</name>
</gene>
<dbReference type="EMBL" id="X62518">
    <property type="protein sequence ID" value="CAA44384.1"/>
    <property type="molecule type" value="Genomic_DNA"/>
</dbReference>
<dbReference type="PIR" id="JC1216">
    <property type="entry name" value="JC1216"/>
</dbReference>
<dbReference type="SMR" id="Q02588"/>
<dbReference type="UniPathway" id="UPA00176"/>
<dbReference type="GO" id="GO:0017000">
    <property type="term" value="P:antibiotic biosynthetic process"/>
    <property type="evidence" value="ECO:0007669"/>
    <property type="project" value="UniProtKB-KW"/>
</dbReference>
<dbReference type="GO" id="GO:0030639">
    <property type="term" value="P:polyketide biosynthetic process"/>
    <property type="evidence" value="ECO:0007669"/>
    <property type="project" value="InterPro"/>
</dbReference>
<dbReference type="Gene3D" id="3.30.70.1090">
    <property type="entry name" value="Dimeric alpha+beta barrel"/>
    <property type="match status" value="1"/>
</dbReference>
<dbReference type="InterPro" id="IPR011008">
    <property type="entry name" value="Dimeric_a/b-barrel"/>
</dbReference>
<dbReference type="InterPro" id="IPR006765">
    <property type="entry name" value="Polyketide_synth_cyclase"/>
</dbReference>
<dbReference type="InterPro" id="IPR038474">
    <property type="entry name" value="Polyketide_synth_cyclase_sf"/>
</dbReference>
<dbReference type="Pfam" id="PF04673">
    <property type="entry name" value="Cyclase_polyket"/>
    <property type="match status" value="1"/>
</dbReference>
<dbReference type="SUPFAM" id="SSF54909">
    <property type="entry name" value="Dimeric alpha+beta barrel"/>
    <property type="match status" value="1"/>
</dbReference>
<protein>
    <recommendedName>
        <fullName>Polyketide synthase CurG</fullName>
    </recommendedName>
</protein>
<sequence>MHHALIVARIARSPAQDIAGVFAASDPGELRHLVGVTQRSLFQFGDVYMHFIEAGAGPGPRIAKVTGHPEFVDISRKLEAYVSPYDPQTWRSPRDAMGRCFYHWERD</sequence>
<keyword id="KW-0045">Antibiotic biosynthesis</keyword>
<comment type="pathway">
    <text>Antibiotic biosynthesis; curamycin biosynthesis.</text>
</comment>
<organism>
    <name type="scientific">Streptomyces cyaneus</name>
    <name type="common">Streptomyces curacoi</name>
    <dbReference type="NCBI Taxonomy" id="1904"/>
    <lineage>
        <taxon>Bacteria</taxon>
        <taxon>Bacillati</taxon>
        <taxon>Actinomycetota</taxon>
        <taxon>Actinomycetes</taxon>
        <taxon>Kitasatosporales</taxon>
        <taxon>Streptomycetaceae</taxon>
        <taxon>Streptomyces</taxon>
    </lineage>
</organism>